<name>NACA_BOTFB</name>
<proteinExistence type="inferred from homology"/>
<dbReference type="EMBL" id="CP009813">
    <property type="protein sequence ID" value="ATZ53516.1"/>
    <property type="molecule type" value="Genomic_DNA"/>
</dbReference>
<dbReference type="RefSeq" id="XP_001551609.1">
    <property type="nucleotide sequence ID" value="XM_001551559.1"/>
</dbReference>
<dbReference type="SMR" id="A6SB28"/>
<dbReference type="EnsemblFungi" id="Bcin09g03560.1">
    <property type="protein sequence ID" value="Bcin09p03560.1"/>
    <property type="gene ID" value="Bcin09g03560"/>
</dbReference>
<dbReference type="VEuPathDB" id="FungiDB:Bcin09g03560"/>
<dbReference type="OMA" id="SQKMIFA"/>
<dbReference type="OrthoDB" id="3169036at2759"/>
<dbReference type="Proteomes" id="UP000001798">
    <property type="component" value="Chromosome bcin09"/>
</dbReference>
<dbReference type="GO" id="GO:0005854">
    <property type="term" value="C:nascent polypeptide-associated complex"/>
    <property type="evidence" value="ECO:0007669"/>
    <property type="project" value="InterPro"/>
</dbReference>
<dbReference type="GO" id="GO:0005634">
    <property type="term" value="C:nucleus"/>
    <property type="evidence" value="ECO:0007669"/>
    <property type="project" value="UniProtKB-SubCell"/>
</dbReference>
<dbReference type="GO" id="GO:0015031">
    <property type="term" value="P:protein transport"/>
    <property type="evidence" value="ECO:0007669"/>
    <property type="project" value="UniProtKB-KW"/>
</dbReference>
<dbReference type="CDD" id="cd22054">
    <property type="entry name" value="NAC_NACA"/>
    <property type="match status" value="1"/>
</dbReference>
<dbReference type="CDD" id="cd14358">
    <property type="entry name" value="UBA_NAC_euk"/>
    <property type="match status" value="1"/>
</dbReference>
<dbReference type="FunFam" id="2.20.70.30:FF:000002">
    <property type="entry name" value="Nascent polypeptide-associated complex (NAC), alpha subunit"/>
    <property type="match status" value="1"/>
</dbReference>
<dbReference type="FunFam" id="1.10.8.10:FF:000006">
    <property type="entry name" value="Putative nascent polypeptide-associated complex subunit alpha"/>
    <property type="match status" value="1"/>
</dbReference>
<dbReference type="Gene3D" id="1.10.8.10">
    <property type="entry name" value="DNA helicase RuvA subunit, C-terminal domain"/>
    <property type="match status" value="1"/>
</dbReference>
<dbReference type="Gene3D" id="2.20.70.30">
    <property type="entry name" value="Nascent polypeptide-associated complex domain"/>
    <property type="match status" value="1"/>
</dbReference>
<dbReference type="InterPro" id="IPR016641">
    <property type="entry name" value="EGD2/NACA0like"/>
</dbReference>
<dbReference type="InterPro" id="IPR044034">
    <property type="entry name" value="NAC-like_UBA"/>
</dbReference>
<dbReference type="InterPro" id="IPR038187">
    <property type="entry name" value="NAC_A/B_dom_sf"/>
</dbReference>
<dbReference type="InterPro" id="IPR002715">
    <property type="entry name" value="Nas_poly-pep-assoc_cplx_dom"/>
</dbReference>
<dbReference type="PANTHER" id="PTHR21713">
    <property type="entry name" value="NASCENT POLYPEPTIDE ASSOCIATED COMPLEX ALPHA SUBUNIT-RELATED"/>
    <property type="match status" value="1"/>
</dbReference>
<dbReference type="Pfam" id="PF01849">
    <property type="entry name" value="NAC"/>
    <property type="match status" value="1"/>
</dbReference>
<dbReference type="Pfam" id="PF19026">
    <property type="entry name" value="UBA_HYPK"/>
    <property type="match status" value="1"/>
</dbReference>
<dbReference type="PIRSF" id="PIRSF015901">
    <property type="entry name" value="NAC_alpha"/>
    <property type="match status" value="1"/>
</dbReference>
<dbReference type="SMART" id="SM01407">
    <property type="entry name" value="NAC"/>
    <property type="match status" value="1"/>
</dbReference>
<dbReference type="PROSITE" id="PS51151">
    <property type="entry name" value="NAC_AB"/>
    <property type="match status" value="1"/>
</dbReference>
<feature type="chain" id="PRO_0000310161" description="Nascent polypeptide-associated complex subunit alpha">
    <location>
        <begin position="1"/>
        <end position="212"/>
    </location>
</feature>
<feature type="domain" description="NAC-A/B" evidence="2">
    <location>
        <begin position="51"/>
        <end position="116"/>
    </location>
</feature>
<feature type="domain" description="UBA">
    <location>
        <begin position="173"/>
        <end position="212"/>
    </location>
</feature>
<feature type="region of interest" description="Disordered" evidence="3">
    <location>
        <begin position="1"/>
        <end position="54"/>
    </location>
</feature>
<feature type="region of interest" description="Disordered" evidence="3">
    <location>
        <begin position="123"/>
        <end position="177"/>
    </location>
</feature>
<feature type="compositionally biased region" description="Acidic residues" evidence="3">
    <location>
        <begin position="22"/>
        <end position="38"/>
    </location>
</feature>
<feature type="compositionally biased region" description="Basic and acidic residues" evidence="3">
    <location>
        <begin position="128"/>
        <end position="157"/>
    </location>
</feature>
<feature type="compositionally biased region" description="Acidic residues" evidence="3">
    <location>
        <begin position="158"/>
        <end position="169"/>
    </location>
</feature>
<evidence type="ECO:0000250" key="1"/>
<evidence type="ECO:0000255" key="2">
    <source>
        <dbReference type="PROSITE-ProRule" id="PRU00507"/>
    </source>
</evidence>
<evidence type="ECO:0000256" key="3">
    <source>
        <dbReference type="SAM" id="MobiDB-lite"/>
    </source>
</evidence>
<evidence type="ECO:0000305" key="4"/>
<sequence>MSNPRIEELPDNEEPTKQQVTAEDEGSDSSDSEAEGEEVAGIPAGSQVAFSRNEKKARKSIAKLGLTRVPGITRVTLRRPKNILFVINQPEVYKSPTSNTYIVFGEAKIEDLNSQAQASAAAQLAAQESHDHAGHDHSGHDHSHDHGKGKAVDTEEKKEEEEDDTEEVDATGLEDKDIELVMTQASVSRNKAVKALKENDNDIVNSIMALSI</sequence>
<keyword id="KW-0963">Cytoplasm</keyword>
<keyword id="KW-0539">Nucleus</keyword>
<keyword id="KW-0653">Protein transport</keyword>
<keyword id="KW-1185">Reference proteome</keyword>
<keyword id="KW-0813">Transport</keyword>
<reference key="1">
    <citation type="journal article" date="2011" name="PLoS Genet.">
        <title>Genomic analysis of the necrotrophic fungal pathogens Sclerotinia sclerotiorum and Botrytis cinerea.</title>
        <authorList>
            <person name="Amselem J."/>
            <person name="Cuomo C.A."/>
            <person name="van Kan J.A.L."/>
            <person name="Viaud M."/>
            <person name="Benito E.P."/>
            <person name="Couloux A."/>
            <person name="Coutinho P.M."/>
            <person name="de Vries R.P."/>
            <person name="Dyer P.S."/>
            <person name="Fillinger S."/>
            <person name="Fournier E."/>
            <person name="Gout L."/>
            <person name="Hahn M."/>
            <person name="Kohn L."/>
            <person name="Lapalu N."/>
            <person name="Plummer K.M."/>
            <person name="Pradier J.-M."/>
            <person name="Quevillon E."/>
            <person name="Sharon A."/>
            <person name="Simon A."/>
            <person name="ten Have A."/>
            <person name="Tudzynski B."/>
            <person name="Tudzynski P."/>
            <person name="Wincker P."/>
            <person name="Andrew M."/>
            <person name="Anthouard V."/>
            <person name="Beever R.E."/>
            <person name="Beffa R."/>
            <person name="Benoit I."/>
            <person name="Bouzid O."/>
            <person name="Brault B."/>
            <person name="Chen Z."/>
            <person name="Choquer M."/>
            <person name="Collemare J."/>
            <person name="Cotton P."/>
            <person name="Danchin E.G."/>
            <person name="Da Silva C."/>
            <person name="Gautier A."/>
            <person name="Giraud C."/>
            <person name="Giraud T."/>
            <person name="Gonzalez C."/>
            <person name="Grossetete S."/>
            <person name="Gueldener U."/>
            <person name="Henrissat B."/>
            <person name="Howlett B.J."/>
            <person name="Kodira C."/>
            <person name="Kretschmer M."/>
            <person name="Lappartient A."/>
            <person name="Leroch M."/>
            <person name="Levis C."/>
            <person name="Mauceli E."/>
            <person name="Neuveglise C."/>
            <person name="Oeser B."/>
            <person name="Pearson M."/>
            <person name="Poulain J."/>
            <person name="Poussereau N."/>
            <person name="Quesneville H."/>
            <person name="Rascle C."/>
            <person name="Schumacher J."/>
            <person name="Segurens B."/>
            <person name="Sexton A."/>
            <person name="Silva E."/>
            <person name="Sirven C."/>
            <person name="Soanes D.M."/>
            <person name="Talbot N.J."/>
            <person name="Templeton M."/>
            <person name="Yandava C."/>
            <person name="Yarden O."/>
            <person name="Zeng Q."/>
            <person name="Rollins J.A."/>
            <person name="Lebrun M.-H."/>
            <person name="Dickman M."/>
        </authorList>
    </citation>
    <scope>NUCLEOTIDE SEQUENCE [LARGE SCALE GENOMIC DNA]</scope>
    <source>
        <strain>B05.10</strain>
    </source>
</reference>
<reference key="2">
    <citation type="journal article" date="2012" name="Eukaryot. Cell">
        <title>Genome update of Botrytis cinerea strains B05.10 and T4.</title>
        <authorList>
            <person name="Staats M."/>
            <person name="van Kan J.A.L."/>
        </authorList>
    </citation>
    <scope>NUCLEOTIDE SEQUENCE [LARGE SCALE GENOMIC DNA]</scope>
    <scope>GENOME REANNOTATION</scope>
    <source>
        <strain>B05.10</strain>
    </source>
</reference>
<reference key="3">
    <citation type="journal article" date="2017" name="Mol. Plant Pathol.">
        <title>A gapless genome sequence of the fungus Botrytis cinerea.</title>
        <authorList>
            <person name="van Kan J.A.L."/>
            <person name="Stassen J.H.M."/>
            <person name="Mosbach A."/>
            <person name="van der Lee T.A.J."/>
            <person name="Faino L."/>
            <person name="Farmer A.D."/>
            <person name="Papasotiriou D.G."/>
            <person name="Zhou S."/>
            <person name="Seidl M.F."/>
            <person name="Cottam E."/>
            <person name="Edel D."/>
            <person name="Hahn M."/>
            <person name="Schwartz D.C."/>
            <person name="Dietrich R.A."/>
            <person name="Widdison S."/>
            <person name="Scalliet G."/>
        </authorList>
    </citation>
    <scope>NUCLEOTIDE SEQUENCE [LARGE SCALE GENOMIC DNA]</scope>
    <scope>GENOME REANNOTATION</scope>
    <source>
        <strain>B05.10</strain>
    </source>
</reference>
<protein>
    <recommendedName>
        <fullName>Nascent polypeptide-associated complex subunit alpha</fullName>
        <shortName>NAC-alpha</shortName>
    </recommendedName>
    <alternativeName>
        <fullName>Alpha-NAC</fullName>
    </alternativeName>
</protein>
<accession>A6SB28</accession>
<accession>A0A384JSE7</accession>
<gene>
    <name type="primary">egd2</name>
    <name type="ORF">BC1G_09983</name>
    <name type="ORF">BCIN_09g03560</name>
</gene>
<comment type="function">
    <text evidence="1">Component of the nascent polypeptide-associated complex (NAC), a dynamic component of the ribosomal exit tunnel, protecting the emerging polypeptides from interaction with other cytoplasmic proteins to ensure appropriate nascent protein targeting. The NAC complex also promotes mitochondrial protein import by enhancing productive ribosome interactions with the outer mitochondrial membrane and blocks the inappropriate interaction of ribosomes translating non-secretory nascent polypeptides with translocation sites in the membrane of the endoplasmic reticulum. EGD2 may also be involved in transcription regulation (By similarity).</text>
</comment>
<comment type="subunit">
    <text evidence="1">Part of the nascent polypeptide-associated complex (NAC), consisting of EGD2 and EGD1. NAC associates with ribosomes via EGD1 (By similarity).</text>
</comment>
<comment type="subcellular location">
    <subcellularLocation>
        <location evidence="1">Cytoplasm</location>
    </subcellularLocation>
    <subcellularLocation>
        <location evidence="1">Nucleus</location>
    </subcellularLocation>
    <text evidence="1">Predominantly cytoplasmic, may also transiently localize to the nucleus.</text>
</comment>
<comment type="similarity">
    <text evidence="4">Belongs to the NAC-alpha family.</text>
</comment>
<organism>
    <name type="scientific">Botryotinia fuckeliana (strain B05.10)</name>
    <name type="common">Noble rot fungus</name>
    <name type="synonym">Botrytis cinerea</name>
    <dbReference type="NCBI Taxonomy" id="332648"/>
    <lineage>
        <taxon>Eukaryota</taxon>
        <taxon>Fungi</taxon>
        <taxon>Dikarya</taxon>
        <taxon>Ascomycota</taxon>
        <taxon>Pezizomycotina</taxon>
        <taxon>Leotiomycetes</taxon>
        <taxon>Helotiales</taxon>
        <taxon>Sclerotiniaceae</taxon>
        <taxon>Botrytis</taxon>
    </lineage>
</organism>